<keyword id="KW-0025">Alternative splicing</keyword>
<keyword id="KW-0175">Coiled coil</keyword>
<keyword id="KW-0597">Phosphoprotein</keyword>
<keyword id="KW-1185">Reference proteome</keyword>
<keyword id="KW-0677">Repeat</keyword>
<keyword id="KW-0808">Transferase</keyword>
<keyword id="KW-0833">Ubl conjugation pathway</keyword>
<proteinExistence type="evidence at protein level"/>
<accession>O22193</accession>
<accession>F4ILG7</accession>
<organism>
    <name type="scientific">Arabidopsis thaliana</name>
    <name type="common">Mouse-ear cress</name>
    <dbReference type="NCBI Taxonomy" id="3702"/>
    <lineage>
        <taxon>Eukaryota</taxon>
        <taxon>Viridiplantae</taxon>
        <taxon>Streptophyta</taxon>
        <taxon>Embryophyta</taxon>
        <taxon>Tracheophyta</taxon>
        <taxon>Spermatophyta</taxon>
        <taxon>Magnoliopsida</taxon>
        <taxon>eudicotyledons</taxon>
        <taxon>Gunneridae</taxon>
        <taxon>Pentapetalae</taxon>
        <taxon>rosids</taxon>
        <taxon>malvids</taxon>
        <taxon>Brassicales</taxon>
        <taxon>Brassicaceae</taxon>
        <taxon>Camelineae</taxon>
        <taxon>Arabidopsis</taxon>
    </lineage>
</organism>
<comment type="function">
    <text evidence="1">Functions as an E3 ubiquitin ligase.</text>
</comment>
<comment type="catalytic activity">
    <reaction>
        <text>S-ubiquitinyl-[E2 ubiquitin-conjugating enzyme]-L-cysteine + [acceptor protein]-L-lysine = [E2 ubiquitin-conjugating enzyme]-L-cysteine + N(6)-ubiquitinyl-[acceptor protein]-L-lysine.</text>
        <dbReference type="EC" id="2.3.2.27"/>
    </reaction>
</comment>
<comment type="pathway">
    <text>Protein modification; protein ubiquitination.</text>
</comment>
<comment type="alternative products">
    <event type="alternative splicing"/>
    <isoform>
        <id>O22193-1</id>
        <name>1</name>
        <sequence type="displayed"/>
    </isoform>
    <text>A number of isoforms are produced. According to EST sequences.</text>
</comment>
<comment type="sequence caution" evidence="4">
    <conflict type="erroneous gene model prediction">
        <sequence resource="EMBL-CDS" id="AAB87116"/>
    </conflict>
</comment>
<comment type="sequence caution" evidence="4">
    <conflict type="erroneous gene model prediction">
        <sequence resource="EMBL-CDS" id="AAM14930"/>
    </conflict>
</comment>
<feature type="chain" id="PRO_0000315407" description="U-box domain-containing protein 4">
    <location>
        <begin position="1"/>
        <end position="826"/>
    </location>
</feature>
<feature type="domain" description="U-box">
    <location>
        <begin position="229"/>
        <end position="303"/>
    </location>
</feature>
<feature type="repeat" description="ARM 1">
    <location>
        <begin position="530"/>
        <end position="570"/>
    </location>
</feature>
<feature type="repeat" description="ARM 2">
    <location>
        <begin position="573"/>
        <end position="612"/>
    </location>
</feature>
<feature type="repeat" description="ARM 3">
    <location>
        <begin position="614"/>
        <end position="653"/>
    </location>
</feature>
<feature type="repeat" description="ARM 4">
    <location>
        <begin position="655"/>
        <end position="694"/>
    </location>
</feature>
<feature type="repeat" description="ARM 5">
    <location>
        <begin position="696"/>
        <end position="734"/>
    </location>
</feature>
<feature type="repeat" description="ARM 6">
    <location>
        <begin position="736"/>
        <end position="775"/>
    </location>
</feature>
<feature type="repeat" description="ARM 7">
    <location>
        <begin position="778"/>
        <end position="817"/>
    </location>
</feature>
<feature type="region of interest" description="Disordered" evidence="3">
    <location>
        <begin position="330"/>
        <end position="501"/>
    </location>
</feature>
<feature type="coiled-coil region" evidence="2">
    <location>
        <begin position="172"/>
        <end position="204"/>
    </location>
</feature>
<feature type="compositionally biased region" description="Polar residues" evidence="3">
    <location>
        <begin position="347"/>
        <end position="360"/>
    </location>
</feature>
<feature type="compositionally biased region" description="Basic and acidic residues" evidence="3">
    <location>
        <begin position="391"/>
        <end position="414"/>
    </location>
</feature>
<feature type="compositionally biased region" description="Low complexity" evidence="3">
    <location>
        <begin position="416"/>
        <end position="428"/>
    </location>
</feature>
<feature type="compositionally biased region" description="Basic and acidic residues" evidence="3">
    <location>
        <begin position="492"/>
        <end position="501"/>
    </location>
</feature>
<feature type="modified residue" description="Phosphoserine" evidence="5">
    <location>
        <position position="396"/>
    </location>
</feature>
<gene>
    <name type="primary">PUB4</name>
    <name type="ordered locus">At2g23140</name>
    <name type="ORF">T20D16.23</name>
</gene>
<reference key="1">
    <citation type="journal article" date="1999" name="Nature">
        <title>Sequence and analysis of chromosome 2 of the plant Arabidopsis thaliana.</title>
        <authorList>
            <person name="Lin X."/>
            <person name="Kaul S."/>
            <person name="Rounsley S.D."/>
            <person name="Shea T.P."/>
            <person name="Benito M.-I."/>
            <person name="Town C.D."/>
            <person name="Fujii C.Y."/>
            <person name="Mason T.M."/>
            <person name="Bowman C.L."/>
            <person name="Barnstead M.E."/>
            <person name="Feldblyum T.V."/>
            <person name="Buell C.R."/>
            <person name="Ketchum K.A."/>
            <person name="Lee J.J."/>
            <person name="Ronning C.M."/>
            <person name="Koo H.L."/>
            <person name="Moffat K.S."/>
            <person name="Cronin L.A."/>
            <person name="Shen M."/>
            <person name="Pai G."/>
            <person name="Van Aken S."/>
            <person name="Umayam L."/>
            <person name="Tallon L.J."/>
            <person name="Gill J.E."/>
            <person name="Adams M.D."/>
            <person name="Carrera A.J."/>
            <person name="Creasy T.H."/>
            <person name="Goodman H.M."/>
            <person name="Somerville C.R."/>
            <person name="Copenhaver G.P."/>
            <person name="Preuss D."/>
            <person name="Nierman W.C."/>
            <person name="White O."/>
            <person name="Eisen J.A."/>
            <person name="Salzberg S.L."/>
            <person name="Fraser C.M."/>
            <person name="Venter J.C."/>
        </authorList>
    </citation>
    <scope>NUCLEOTIDE SEQUENCE [LARGE SCALE GENOMIC DNA]</scope>
    <source>
        <strain>cv. Columbia</strain>
    </source>
</reference>
<reference key="2">
    <citation type="journal article" date="2017" name="Plant J.">
        <title>Araport11: a complete reannotation of the Arabidopsis thaliana reference genome.</title>
        <authorList>
            <person name="Cheng C.Y."/>
            <person name="Krishnakumar V."/>
            <person name="Chan A.P."/>
            <person name="Thibaud-Nissen F."/>
            <person name="Schobel S."/>
            <person name="Town C.D."/>
        </authorList>
    </citation>
    <scope>GENOME REANNOTATION</scope>
    <source>
        <strain>cv. Columbia</strain>
    </source>
</reference>
<reference key="3">
    <citation type="journal article" date="2001" name="Trends Plant Sci.">
        <title>The U-box protein family in plants.</title>
        <authorList>
            <person name="Azevedo C."/>
            <person name="Santos-Rosa M.J."/>
            <person name="Shirasu K."/>
        </authorList>
    </citation>
    <scope>GENE FAMILY ORGANIZATION</scope>
    <scope>NOMENCLATURE</scope>
</reference>
<reference key="4">
    <citation type="journal article" date="2004" name="Plant Physiol.">
        <title>A large complement of the predicted Arabidopsis ARM repeat proteins are members of the U-box E3 ubiquitin ligase family.</title>
        <authorList>
            <person name="Mudgil Y."/>
            <person name="Shiu S.-H."/>
            <person name="Stone S.L."/>
            <person name="Salt J.N."/>
            <person name="Goring D.R."/>
        </authorList>
    </citation>
    <scope>GENE FAMILY ORGANIZATION</scope>
</reference>
<reference key="5">
    <citation type="journal article" date="2009" name="Plant Physiol.">
        <title>Large-scale Arabidopsis phosphoproteome profiling reveals novel chloroplast kinase substrates and phosphorylation networks.</title>
        <authorList>
            <person name="Reiland S."/>
            <person name="Messerli G."/>
            <person name="Baerenfaller K."/>
            <person name="Gerrits B."/>
            <person name="Endler A."/>
            <person name="Grossmann J."/>
            <person name="Gruissem W."/>
            <person name="Baginsky S."/>
        </authorList>
    </citation>
    <scope>PHOSPHORYLATION [LARGE SCALE ANALYSIS] AT SER-396</scope>
    <scope>IDENTIFICATION BY MASS SPECTROMETRY [LARGE SCALE ANALYSIS]</scope>
</reference>
<dbReference type="EC" id="2.3.2.27"/>
<dbReference type="EMBL" id="AC002391">
    <property type="protein sequence ID" value="AAB87116.1"/>
    <property type="status" value="ALT_SEQ"/>
    <property type="molecule type" value="Genomic_DNA"/>
</dbReference>
<dbReference type="EMBL" id="AC004401">
    <property type="protein sequence ID" value="AAM14930.1"/>
    <property type="status" value="ALT_SEQ"/>
    <property type="molecule type" value="Genomic_DNA"/>
</dbReference>
<dbReference type="EMBL" id="CP002685">
    <property type="protein sequence ID" value="AEC07418.1"/>
    <property type="molecule type" value="Genomic_DNA"/>
</dbReference>
<dbReference type="EMBL" id="CP002685">
    <property type="protein sequence ID" value="ANM61792.1"/>
    <property type="molecule type" value="Genomic_DNA"/>
</dbReference>
<dbReference type="PIR" id="T00518">
    <property type="entry name" value="T00518"/>
</dbReference>
<dbReference type="RefSeq" id="NP_001189583.1">
    <molecule id="O22193-1"/>
    <property type="nucleotide sequence ID" value="NM_001202654.2"/>
</dbReference>
<dbReference type="RefSeq" id="NP_001323989.1">
    <molecule id="O22193-1"/>
    <property type="nucleotide sequence ID" value="NM_001335839.1"/>
</dbReference>
<dbReference type="SMR" id="O22193"/>
<dbReference type="BioGRID" id="2199">
    <property type="interactions" value="1"/>
</dbReference>
<dbReference type="FunCoup" id="O22193">
    <property type="interactions" value="1482"/>
</dbReference>
<dbReference type="STRING" id="3702.O22193"/>
<dbReference type="iPTMnet" id="O22193"/>
<dbReference type="PaxDb" id="3702-AT2G23140.1"/>
<dbReference type="ProteomicsDB" id="226252">
    <molecule id="O22193-1"/>
</dbReference>
<dbReference type="EnsemblPlants" id="AT2G23140.2">
    <molecule id="O22193-1"/>
    <property type="protein sequence ID" value="AT2G23140.2"/>
    <property type="gene ID" value="AT2G23140"/>
</dbReference>
<dbReference type="EnsemblPlants" id="AT2G23140.4">
    <molecule id="O22193-1"/>
    <property type="protein sequence ID" value="AT2G23140.4"/>
    <property type="gene ID" value="AT2G23140"/>
</dbReference>
<dbReference type="GeneID" id="816846"/>
<dbReference type="Gramene" id="AT2G23140.2">
    <molecule id="O22193-1"/>
    <property type="protein sequence ID" value="AT2G23140.2"/>
    <property type="gene ID" value="AT2G23140"/>
</dbReference>
<dbReference type="Gramene" id="AT2G23140.4">
    <molecule id="O22193-1"/>
    <property type="protein sequence ID" value="AT2G23140.4"/>
    <property type="gene ID" value="AT2G23140"/>
</dbReference>
<dbReference type="KEGG" id="ath:AT2G23140"/>
<dbReference type="Araport" id="AT2G23140"/>
<dbReference type="TAIR" id="AT2G23140">
    <property type="gene designation" value="PUB4"/>
</dbReference>
<dbReference type="eggNOG" id="KOG0167">
    <property type="taxonomic scope" value="Eukaryota"/>
</dbReference>
<dbReference type="HOGENOM" id="CLU_006348_5_0_1"/>
<dbReference type="InParanoid" id="O22193"/>
<dbReference type="UniPathway" id="UPA00143"/>
<dbReference type="PRO" id="PR:O22193"/>
<dbReference type="Proteomes" id="UP000006548">
    <property type="component" value="Chromosome 2"/>
</dbReference>
<dbReference type="ExpressionAtlas" id="O22193">
    <property type="expression patterns" value="baseline and differential"/>
</dbReference>
<dbReference type="GO" id="GO:0004842">
    <property type="term" value="F:ubiquitin-protein transferase activity"/>
    <property type="evidence" value="ECO:0007669"/>
    <property type="project" value="InterPro"/>
</dbReference>
<dbReference type="GO" id="GO:0016567">
    <property type="term" value="P:protein ubiquitination"/>
    <property type="evidence" value="ECO:0007669"/>
    <property type="project" value="UniProtKB-UniPathway"/>
</dbReference>
<dbReference type="CDD" id="cd16664">
    <property type="entry name" value="RING-Ubox_PUB"/>
    <property type="match status" value="1"/>
</dbReference>
<dbReference type="FunFam" id="1.25.10.10:FF:000082">
    <property type="entry name" value="RING-type E3 ubiquitin transferase"/>
    <property type="match status" value="1"/>
</dbReference>
<dbReference type="FunFam" id="3.30.40.10:FF:000218">
    <property type="entry name" value="RING-type E3 ubiquitin transferase"/>
    <property type="match status" value="1"/>
</dbReference>
<dbReference type="Gene3D" id="1.25.10.10">
    <property type="entry name" value="Leucine-rich Repeat Variant"/>
    <property type="match status" value="1"/>
</dbReference>
<dbReference type="Gene3D" id="3.30.40.10">
    <property type="entry name" value="Zinc/RING finger domain, C3HC4 (zinc finger)"/>
    <property type="match status" value="1"/>
</dbReference>
<dbReference type="InterPro" id="IPR011989">
    <property type="entry name" value="ARM-like"/>
</dbReference>
<dbReference type="InterPro" id="IPR016024">
    <property type="entry name" value="ARM-type_fold"/>
</dbReference>
<dbReference type="InterPro" id="IPR000225">
    <property type="entry name" value="Armadillo"/>
</dbReference>
<dbReference type="InterPro" id="IPR045210">
    <property type="entry name" value="RING-Ubox_PUB"/>
</dbReference>
<dbReference type="InterPro" id="IPR003613">
    <property type="entry name" value="Ubox_domain"/>
</dbReference>
<dbReference type="InterPro" id="IPR013083">
    <property type="entry name" value="Znf_RING/FYVE/PHD"/>
</dbReference>
<dbReference type="PANTHER" id="PTHR23315">
    <property type="entry name" value="U BOX DOMAIN-CONTAINING"/>
    <property type="match status" value="1"/>
</dbReference>
<dbReference type="PANTHER" id="PTHR23315:SF7">
    <property type="entry name" value="U-BOX DOMAIN-CONTAINING PROTEIN 4"/>
    <property type="match status" value="1"/>
</dbReference>
<dbReference type="Pfam" id="PF00514">
    <property type="entry name" value="Arm"/>
    <property type="match status" value="3"/>
</dbReference>
<dbReference type="Pfam" id="PF25240">
    <property type="entry name" value="PUB2_N"/>
    <property type="match status" value="1"/>
</dbReference>
<dbReference type="Pfam" id="PF04564">
    <property type="entry name" value="U-box"/>
    <property type="match status" value="1"/>
</dbReference>
<dbReference type="SMART" id="SM00185">
    <property type="entry name" value="ARM"/>
    <property type="match status" value="5"/>
</dbReference>
<dbReference type="SMART" id="SM00504">
    <property type="entry name" value="Ubox"/>
    <property type="match status" value="1"/>
</dbReference>
<dbReference type="SUPFAM" id="SSF48371">
    <property type="entry name" value="ARM repeat"/>
    <property type="match status" value="1"/>
</dbReference>
<dbReference type="SUPFAM" id="SSF57850">
    <property type="entry name" value="RING/U-box"/>
    <property type="match status" value="1"/>
</dbReference>
<dbReference type="PROSITE" id="PS50176">
    <property type="entry name" value="ARM_REPEAT"/>
    <property type="match status" value="4"/>
</dbReference>
<dbReference type="PROSITE" id="PS51698">
    <property type="entry name" value="U_BOX"/>
    <property type="match status" value="1"/>
</dbReference>
<protein>
    <recommendedName>
        <fullName>U-box domain-containing protein 4</fullName>
        <ecNumber>2.3.2.27</ecNumber>
    </recommendedName>
    <alternativeName>
        <fullName>Plant U-box protein 4</fullName>
    </alternativeName>
    <alternativeName>
        <fullName evidence="4">RING-type E3 ubiquitin transferase PUB4</fullName>
    </alternativeName>
</protein>
<evidence type="ECO:0000250" key="1"/>
<evidence type="ECO:0000255" key="2"/>
<evidence type="ECO:0000256" key="3">
    <source>
        <dbReference type="SAM" id="MobiDB-lite"/>
    </source>
</evidence>
<evidence type="ECO:0000305" key="4"/>
<evidence type="ECO:0007744" key="5">
    <source>
    </source>
</evidence>
<name>PUB4_ARATH</name>
<sequence>MEVLLRSISSFLNLSSSKHIDLDPFEKYYKRVEELLRVLKPIADVVVTSDFVFDEKLGKAFEELTQDVDQSIDLFRSWQAFSSKVYFVLQIESLLPKMRDTIVDTFQFLMSSKNHLPDELSPASLEQCLEKIKHLSYEEISSVIDGALRDQRDGVGPSPEILVKIGENTGLRSNQEILIEAVALERQKEMAEQSENNAEVEFLDQLIVIVNRMHERLLLIKQTQTSSVAILADFFCPLSLEVMTDPVIVSSGQTYEKAFIKRWIDLGLKVCPKTRQTLTHTTLIPNYTVKALIANWCETNDVKLPDPNKSTSLNELSPLLSCTDSIPSTGADVSARKVSNKSHDWDASSSETGKPSFSSRATEREGASPSRPASALGASSPGISGNGYGLDARRGSLNDFEDRSNDSRELRTDAPGRSSVSSTTRGSVENGQTSENHHHRSPSATSTVSNEEFPRADANENSEESAHATPYSSDASGEIRSGPLAATTSAATRRDLSDFSPKFMDRRTRGQFWRRPSERLGSRIVSAPSNETRRDLSEVETQVKKLVEELKSSSLDTQRQATAELRLLAKHNMDNRIVIGNSGAIVLLVELLYSTDSATQENAVTALLNLSINDNNKKAIADAGAIEPLIHVLENGSSEAKENSAATLFSLSVIEENKIKIGQSGAIGPLVDLLGNGTPRGKKDAATALFNLSIHQENKAMIVQSGAVRYLIDLMDPAAGMVDKAVAVLANLATIPEGRNAIGQEGGIPLLVEVVELGSARGKENAAAALLQLSTNSGRFCNMVLQEGAVPPLVALSQSGTPRAREKAQALLSYFRNQRHGNAGRG</sequence>